<organism>
    <name type="scientific">Pelotomaculum thermopropionicum (strain DSM 13744 / JCM 10971 / SI)</name>
    <dbReference type="NCBI Taxonomy" id="370438"/>
    <lineage>
        <taxon>Bacteria</taxon>
        <taxon>Bacillati</taxon>
        <taxon>Bacillota</taxon>
        <taxon>Clostridia</taxon>
        <taxon>Eubacteriales</taxon>
        <taxon>Desulfotomaculaceae</taxon>
        <taxon>Pelotomaculum</taxon>
    </lineage>
</organism>
<sequence>MERTYLMIKPDGVQRGLVGEIIARFEKRGFKIVGLKMIRIGRELAEKHYGEHKGKPFFEPLVGYITSSPVVAMVIEGKNAVGAAREMMGATDPLKAAPGTIRGTYGIDIGRNVIHGSDSPASAQREIALFFSADELMEYGLELDRWVYE</sequence>
<name>NDK_PELTS</name>
<keyword id="KW-0067">ATP-binding</keyword>
<keyword id="KW-0963">Cytoplasm</keyword>
<keyword id="KW-0418">Kinase</keyword>
<keyword id="KW-0460">Magnesium</keyword>
<keyword id="KW-0479">Metal-binding</keyword>
<keyword id="KW-0546">Nucleotide metabolism</keyword>
<keyword id="KW-0547">Nucleotide-binding</keyword>
<keyword id="KW-0597">Phosphoprotein</keyword>
<keyword id="KW-1185">Reference proteome</keyword>
<keyword id="KW-0808">Transferase</keyword>
<protein>
    <recommendedName>
        <fullName evidence="1">Nucleoside diphosphate kinase</fullName>
        <shortName evidence="1">NDK</shortName>
        <shortName evidence="1">NDP kinase</shortName>
        <ecNumber evidence="1">2.7.4.6</ecNumber>
    </recommendedName>
    <alternativeName>
        <fullName evidence="1">Nucleoside-2-P kinase</fullName>
    </alternativeName>
</protein>
<evidence type="ECO:0000255" key="1">
    <source>
        <dbReference type="HAMAP-Rule" id="MF_00451"/>
    </source>
</evidence>
<gene>
    <name evidence="1" type="primary">ndk</name>
    <name type="ordered locus">PTH_0199</name>
</gene>
<comment type="function">
    <text evidence="1">Major role in the synthesis of nucleoside triphosphates other than ATP. The ATP gamma phosphate is transferred to the NDP beta phosphate via a ping-pong mechanism, using a phosphorylated active-site intermediate.</text>
</comment>
<comment type="catalytic activity">
    <reaction evidence="1">
        <text>a 2'-deoxyribonucleoside 5'-diphosphate + ATP = a 2'-deoxyribonucleoside 5'-triphosphate + ADP</text>
        <dbReference type="Rhea" id="RHEA:44640"/>
        <dbReference type="ChEBI" id="CHEBI:30616"/>
        <dbReference type="ChEBI" id="CHEBI:61560"/>
        <dbReference type="ChEBI" id="CHEBI:73316"/>
        <dbReference type="ChEBI" id="CHEBI:456216"/>
        <dbReference type="EC" id="2.7.4.6"/>
    </reaction>
</comment>
<comment type="catalytic activity">
    <reaction evidence="1">
        <text>a ribonucleoside 5'-diphosphate + ATP = a ribonucleoside 5'-triphosphate + ADP</text>
        <dbReference type="Rhea" id="RHEA:18113"/>
        <dbReference type="ChEBI" id="CHEBI:30616"/>
        <dbReference type="ChEBI" id="CHEBI:57930"/>
        <dbReference type="ChEBI" id="CHEBI:61557"/>
        <dbReference type="ChEBI" id="CHEBI:456216"/>
        <dbReference type="EC" id="2.7.4.6"/>
    </reaction>
</comment>
<comment type="cofactor">
    <cofactor evidence="1">
        <name>Mg(2+)</name>
        <dbReference type="ChEBI" id="CHEBI:18420"/>
    </cofactor>
</comment>
<comment type="subunit">
    <text evidence="1">Homotetramer.</text>
</comment>
<comment type="subcellular location">
    <subcellularLocation>
        <location evidence="1">Cytoplasm</location>
    </subcellularLocation>
</comment>
<comment type="similarity">
    <text evidence="1">Belongs to the NDK family.</text>
</comment>
<proteinExistence type="inferred from homology"/>
<dbReference type="EC" id="2.7.4.6" evidence="1"/>
<dbReference type="EMBL" id="AP009389">
    <property type="protein sequence ID" value="BAF58380.1"/>
    <property type="molecule type" value="Genomic_DNA"/>
</dbReference>
<dbReference type="SMR" id="A5D5U8"/>
<dbReference type="STRING" id="370438.PTH_0199"/>
<dbReference type="KEGG" id="pth:PTH_0199"/>
<dbReference type="eggNOG" id="COG0105">
    <property type="taxonomic scope" value="Bacteria"/>
</dbReference>
<dbReference type="HOGENOM" id="CLU_060216_6_3_9"/>
<dbReference type="Proteomes" id="UP000006556">
    <property type="component" value="Chromosome"/>
</dbReference>
<dbReference type="GO" id="GO:0005737">
    <property type="term" value="C:cytoplasm"/>
    <property type="evidence" value="ECO:0007669"/>
    <property type="project" value="UniProtKB-SubCell"/>
</dbReference>
<dbReference type="GO" id="GO:0005524">
    <property type="term" value="F:ATP binding"/>
    <property type="evidence" value="ECO:0007669"/>
    <property type="project" value="UniProtKB-UniRule"/>
</dbReference>
<dbReference type="GO" id="GO:0046872">
    <property type="term" value="F:metal ion binding"/>
    <property type="evidence" value="ECO:0007669"/>
    <property type="project" value="UniProtKB-KW"/>
</dbReference>
<dbReference type="GO" id="GO:0004550">
    <property type="term" value="F:nucleoside diphosphate kinase activity"/>
    <property type="evidence" value="ECO:0007669"/>
    <property type="project" value="UniProtKB-UniRule"/>
</dbReference>
<dbReference type="GO" id="GO:0006241">
    <property type="term" value="P:CTP biosynthetic process"/>
    <property type="evidence" value="ECO:0007669"/>
    <property type="project" value="UniProtKB-UniRule"/>
</dbReference>
<dbReference type="GO" id="GO:0006183">
    <property type="term" value="P:GTP biosynthetic process"/>
    <property type="evidence" value="ECO:0007669"/>
    <property type="project" value="UniProtKB-UniRule"/>
</dbReference>
<dbReference type="GO" id="GO:0006228">
    <property type="term" value="P:UTP biosynthetic process"/>
    <property type="evidence" value="ECO:0007669"/>
    <property type="project" value="UniProtKB-UniRule"/>
</dbReference>
<dbReference type="CDD" id="cd04413">
    <property type="entry name" value="NDPk_I"/>
    <property type="match status" value="1"/>
</dbReference>
<dbReference type="FunFam" id="3.30.70.141:FF:000002">
    <property type="entry name" value="Nucleoside diphosphate kinase"/>
    <property type="match status" value="1"/>
</dbReference>
<dbReference type="Gene3D" id="3.30.70.141">
    <property type="entry name" value="Nucleoside diphosphate kinase-like domain"/>
    <property type="match status" value="1"/>
</dbReference>
<dbReference type="HAMAP" id="MF_00451">
    <property type="entry name" value="NDP_kinase"/>
    <property type="match status" value="1"/>
</dbReference>
<dbReference type="InterPro" id="IPR034907">
    <property type="entry name" value="NDK-like_dom"/>
</dbReference>
<dbReference type="InterPro" id="IPR036850">
    <property type="entry name" value="NDK-like_dom_sf"/>
</dbReference>
<dbReference type="InterPro" id="IPR001564">
    <property type="entry name" value="Nucleoside_diP_kinase"/>
</dbReference>
<dbReference type="InterPro" id="IPR023005">
    <property type="entry name" value="Nucleoside_diP_kinase_AS"/>
</dbReference>
<dbReference type="NCBIfam" id="NF001908">
    <property type="entry name" value="PRK00668.1"/>
    <property type="match status" value="1"/>
</dbReference>
<dbReference type="PANTHER" id="PTHR11349">
    <property type="entry name" value="NUCLEOSIDE DIPHOSPHATE KINASE"/>
    <property type="match status" value="1"/>
</dbReference>
<dbReference type="Pfam" id="PF00334">
    <property type="entry name" value="NDK"/>
    <property type="match status" value="1"/>
</dbReference>
<dbReference type="PRINTS" id="PR01243">
    <property type="entry name" value="NUCDPKINASE"/>
</dbReference>
<dbReference type="SMART" id="SM00562">
    <property type="entry name" value="NDK"/>
    <property type="match status" value="1"/>
</dbReference>
<dbReference type="SUPFAM" id="SSF54919">
    <property type="entry name" value="Nucleoside diphosphate kinase, NDK"/>
    <property type="match status" value="1"/>
</dbReference>
<dbReference type="PROSITE" id="PS00469">
    <property type="entry name" value="NDPK"/>
    <property type="match status" value="1"/>
</dbReference>
<dbReference type="PROSITE" id="PS51374">
    <property type="entry name" value="NDPK_LIKE"/>
    <property type="match status" value="1"/>
</dbReference>
<accession>A5D5U8</accession>
<reference key="1">
    <citation type="journal article" date="2008" name="Genome Res.">
        <title>The genome of Pelotomaculum thermopropionicum reveals niche-associated evolution in anaerobic microbiota.</title>
        <authorList>
            <person name="Kosaka T."/>
            <person name="Kato S."/>
            <person name="Shimoyama T."/>
            <person name="Ishii S."/>
            <person name="Abe T."/>
            <person name="Watanabe K."/>
        </authorList>
    </citation>
    <scope>NUCLEOTIDE SEQUENCE [LARGE SCALE GENOMIC DNA]</scope>
    <source>
        <strain>DSM 13744 / JCM 10971 / SI</strain>
    </source>
</reference>
<feature type="chain" id="PRO_1000080971" description="Nucleoside diphosphate kinase">
    <location>
        <begin position="1"/>
        <end position="149"/>
    </location>
</feature>
<feature type="active site" description="Pros-phosphohistidine intermediate" evidence="1">
    <location>
        <position position="115"/>
    </location>
</feature>
<feature type="binding site" evidence="1">
    <location>
        <position position="9"/>
    </location>
    <ligand>
        <name>ATP</name>
        <dbReference type="ChEBI" id="CHEBI:30616"/>
    </ligand>
</feature>
<feature type="binding site" evidence="1">
    <location>
        <position position="57"/>
    </location>
    <ligand>
        <name>ATP</name>
        <dbReference type="ChEBI" id="CHEBI:30616"/>
    </ligand>
</feature>
<feature type="binding site" evidence="1">
    <location>
        <position position="85"/>
    </location>
    <ligand>
        <name>ATP</name>
        <dbReference type="ChEBI" id="CHEBI:30616"/>
    </ligand>
</feature>
<feature type="binding site" evidence="1">
    <location>
        <position position="91"/>
    </location>
    <ligand>
        <name>ATP</name>
        <dbReference type="ChEBI" id="CHEBI:30616"/>
    </ligand>
</feature>
<feature type="binding site" evidence="1">
    <location>
        <position position="102"/>
    </location>
    <ligand>
        <name>ATP</name>
        <dbReference type="ChEBI" id="CHEBI:30616"/>
    </ligand>
</feature>
<feature type="binding site" evidence="1">
    <location>
        <position position="112"/>
    </location>
    <ligand>
        <name>ATP</name>
        <dbReference type="ChEBI" id="CHEBI:30616"/>
    </ligand>
</feature>